<evidence type="ECO:0000255" key="1">
    <source>
        <dbReference type="HAMAP-Rule" id="MF_00693"/>
    </source>
</evidence>
<evidence type="ECO:0000256" key="2">
    <source>
        <dbReference type="SAM" id="MobiDB-lite"/>
    </source>
</evidence>
<organism>
    <name type="scientific">Ruegeria pomeroyi (strain ATCC 700808 / DSM 15171 / DSS-3)</name>
    <name type="common">Silicibacter pomeroyi</name>
    <dbReference type="NCBI Taxonomy" id="246200"/>
    <lineage>
        <taxon>Bacteria</taxon>
        <taxon>Pseudomonadati</taxon>
        <taxon>Pseudomonadota</taxon>
        <taxon>Alphaproteobacteria</taxon>
        <taxon>Rhodobacterales</taxon>
        <taxon>Roseobacteraceae</taxon>
        <taxon>Ruegeria</taxon>
    </lineage>
</organism>
<dbReference type="EMBL" id="CP000031">
    <property type="protein sequence ID" value="AAV94372.1"/>
    <property type="molecule type" value="Genomic_DNA"/>
</dbReference>
<dbReference type="RefSeq" id="WP_011046819.1">
    <property type="nucleotide sequence ID" value="NC_003911.12"/>
</dbReference>
<dbReference type="SMR" id="Q5LUI2"/>
<dbReference type="STRING" id="246200.SPO1072"/>
<dbReference type="PaxDb" id="246200-SPO1072"/>
<dbReference type="KEGG" id="sil:SPO1072"/>
<dbReference type="eggNOG" id="COG0217">
    <property type="taxonomic scope" value="Bacteria"/>
</dbReference>
<dbReference type="HOGENOM" id="CLU_062974_2_2_5"/>
<dbReference type="OrthoDB" id="9781053at2"/>
<dbReference type="Proteomes" id="UP000001023">
    <property type="component" value="Chromosome"/>
</dbReference>
<dbReference type="GO" id="GO:0005829">
    <property type="term" value="C:cytosol"/>
    <property type="evidence" value="ECO:0007669"/>
    <property type="project" value="TreeGrafter"/>
</dbReference>
<dbReference type="GO" id="GO:0003677">
    <property type="term" value="F:DNA binding"/>
    <property type="evidence" value="ECO:0007669"/>
    <property type="project" value="UniProtKB-UniRule"/>
</dbReference>
<dbReference type="GO" id="GO:0006355">
    <property type="term" value="P:regulation of DNA-templated transcription"/>
    <property type="evidence" value="ECO:0007669"/>
    <property type="project" value="UniProtKB-UniRule"/>
</dbReference>
<dbReference type="FunFam" id="1.10.10.200:FF:000002">
    <property type="entry name" value="Probable transcriptional regulatory protein CLM62_37755"/>
    <property type="match status" value="1"/>
</dbReference>
<dbReference type="Gene3D" id="1.10.10.200">
    <property type="match status" value="1"/>
</dbReference>
<dbReference type="Gene3D" id="3.30.70.980">
    <property type="match status" value="2"/>
</dbReference>
<dbReference type="HAMAP" id="MF_00693">
    <property type="entry name" value="Transcrip_reg_TACO1"/>
    <property type="match status" value="1"/>
</dbReference>
<dbReference type="InterPro" id="IPR017856">
    <property type="entry name" value="Integrase-like_N"/>
</dbReference>
<dbReference type="InterPro" id="IPR048300">
    <property type="entry name" value="TACO1_YebC-like_2nd/3rd_dom"/>
</dbReference>
<dbReference type="InterPro" id="IPR049083">
    <property type="entry name" value="TACO1_YebC_N"/>
</dbReference>
<dbReference type="InterPro" id="IPR002876">
    <property type="entry name" value="Transcrip_reg_TACO1-like"/>
</dbReference>
<dbReference type="InterPro" id="IPR026564">
    <property type="entry name" value="Transcrip_reg_TACO1-like_dom3"/>
</dbReference>
<dbReference type="InterPro" id="IPR029072">
    <property type="entry name" value="YebC-like"/>
</dbReference>
<dbReference type="NCBIfam" id="NF001030">
    <property type="entry name" value="PRK00110.1"/>
    <property type="match status" value="1"/>
</dbReference>
<dbReference type="NCBIfam" id="NF009044">
    <property type="entry name" value="PRK12378.1"/>
    <property type="match status" value="1"/>
</dbReference>
<dbReference type="NCBIfam" id="TIGR01033">
    <property type="entry name" value="YebC/PmpR family DNA-binding transcriptional regulator"/>
    <property type="match status" value="1"/>
</dbReference>
<dbReference type="PANTHER" id="PTHR12532:SF6">
    <property type="entry name" value="TRANSCRIPTIONAL REGULATORY PROTEIN YEBC-RELATED"/>
    <property type="match status" value="1"/>
</dbReference>
<dbReference type="PANTHER" id="PTHR12532">
    <property type="entry name" value="TRANSLATIONAL ACTIVATOR OF CYTOCHROME C OXIDASE 1"/>
    <property type="match status" value="1"/>
</dbReference>
<dbReference type="Pfam" id="PF20772">
    <property type="entry name" value="TACO1_YebC_N"/>
    <property type="match status" value="1"/>
</dbReference>
<dbReference type="Pfam" id="PF01709">
    <property type="entry name" value="Transcrip_reg"/>
    <property type="match status" value="1"/>
</dbReference>
<dbReference type="SUPFAM" id="SSF75625">
    <property type="entry name" value="YebC-like"/>
    <property type="match status" value="1"/>
</dbReference>
<keyword id="KW-0963">Cytoplasm</keyword>
<keyword id="KW-0238">DNA-binding</keyword>
<keyword id="KW-1185">Reference proteome</keyword>
<keyword id="KW-0804">Transcription</keyword>
<keyword id="KW-0805">Transcription regulation</keyword>
<accession>Q5LUI2</accession>
<gene>
    <name type="ordered locus">SPO1072</name>
</gene>
<name>Y1072_RUEPO</name>
<protein>
    <recommendedName>
        <fullName evidence="1">Probable transcriptional regulatory protein SPO1072</fullName>
    </recommendedName>
</protein>
<proteinExistence type="inferred from homology"/>
<sequence>MAGHSKWANIQHRKGRQDAARSKLFSKFSKEITVAAKMGDPDPDKNPRLRLAIKEAKSQSMPKDNIERAIKKAIGGDGDAYEEIRYEGYGPNGVAVIVEAMTDNRNRTASNVRSTFTKHGGNLGETGSVGFMFERKGEVVYPASVGDADTVMMAAIEAGAEDVESSEEGHVIWCADTDLNEVSTALEAELGESDSTKLVWKPSTTTELDLEAMQKLMKLVDALEDDDDVQRVTTNFEASDEVMAAL</sequence>
<reference key="1">
    <citation type="journal article" date="2004" name="Nature">
        <title>Genome sequence of Silicibacter pomeroyi reveals adaptations to the marine environment.</title>
        <authorList>
            <person name="Moran M.A."/>
            <person name="Buchan A."/>
            <person name="Gonzalez J.M."/>
            <person name="Heidelberg J.F."/>
            <person name="Whitman W.B."/>
            <person name="Kiene R.P."/>
            <person name="Henriksen J.R."/>
            <person name="King G.M."/>
            <person name="Belas R."/>
            <person name="Fuqua C."/>
            <person name="Brinkac L.M."/>
            <person name="Lewis M."/>
            <person name="Johri S."/>
            <person name="Weaver B."/>
            <person name="Pai G."/>
            <person name="Eisen J.A."/>
            <person name="Rahe E."/>
            <person name="Sheldon W.M."/>
            <person name="Ye W."/>
            <person name="Miller T.R."/>
            <person name="Carlton J."/>
            <person name="Rasko D.A."/>
            <person name="Paulsen I.T."/>
            <person name="Ren Q."/>
            <person name="Daugherty S.C."/>
            <person name="DeBoy R.T."/>
            <person name="Dodson R.J."/>
            <person name="Durkin A.S."/>
            <person name="Madupu R."/>
            <person name="Nelson W.C."/>
            <person name="Sullivan S.A."/>
            <person name="Rosovitz M.J."/>
            <person name="Haft D.H."/>
            <person name="Selengut J."/>
            <person name="Ward N."/>
        </authorList>
    </citation>
    <scope>NUCLEOTIDE SEQUENCE [LARGE SCALE GENOMIC DNA]</scope>
    <source>
        <strain>ATCC 700808 / DSM 15171 / DSS-3</strain>
    </source>
</reference>
<reference key="2">
    <citation type="journal article" date="2014" name="Stand. Genomic Sci.">
        <title>An updated genome annotation for the model marine bacterium Ruegeria pomeroyi DSS-3.</title>
        <authorList>
            <person name="Rivers A.R."/>
            <person name="Smith C.B."/>
            <person name="Moran M.A."/>
        </authorList>
    </citation>
    <scope>GENOME REANNOTATION</scope>
    <source>
        <strain>ATCC 700808 / DSM 15171 / DSS-3</strain>
    </source>
</reference>
<comment type="subcellular location">
    <subcellularLocation>
        <location evidence="1">Cytoplasm</location>
    </subcellularLocation>
</comment>
<comment type="similarity">
    <text evidence="1">Belongs to the TACO1 family.</text>
</comment>
<feature type="chain" id="PRO_0000175890" description="Probable transcriptional regulatory protein SPO1072">
    <location>
        <begin position="1"/>
        <end position="246"/>
    </location>
</feature>
<feature type="region of interest" description="Disordered" evidence="2">
    <location>
        <begin position="1"/>
        <end position="22"/>
    </location>
</feature>